<comment type="function">
    <text evidence="1">Asymmetrically hydrolyzes Ap4p to yield AMP and ATP.</text>
</comment>
<comment type="catalytic activity">
    <reaction evidence="1">
        <text>P(1),P(4)-bis(5'-guanosyl) tetraphosphate + H2O = GMP + GTP + 2 H(+)</text>
        <dbReference type="Rhea" id="RHEA:22484"/>
        <dbReference type="ChEBI" id="CHEBI:15377"/>
        <dbReference type="ChEBI" id="CHEBI:15378"/>
        <dbReference type="ChEBI" id="CHEBI:37565"/>
        <dbReference type="ChEBI" id="CHEBI:57553"/>
        <dbReference type="ChEBI" id="CHEBI:58115"/>
        <dbReference type="EC" id="3.6.1.17"/>
    </reaction>
</comment>
<comment type="cofactor">
    <cofactor evidence="1">
        <name>Ni(2+)</name>
        <dbReference type="ChEBI" id="CHEBI:49786"/>
    </cofactor>
</comment>
<comment type="similarity">
    <text evidence="1">Belongs to the PrpE family.</text>
</comment>
<feature type="chain" id="PRO_1000145929" description="Bis(5'-nucleosyl)-tetraphosphatase PrpE [asymmetrical]">
    <location>
        <begin position="1"/>
        <end position="246"/>
    </location>
</feature>
<evidence type="ECO:0000255" key="1">
    <source>
        <dbReference type="HAMAP-Rule" id="MF_01443"/>
    </source>
</evidence>
<gene>
    <name evidence="1" type="primary">prpE</name>
    <name type="ordered locus">BCB4264_A1257</name>
</gene>
<protein>
    <recommendedName>
        <fullName evidence="1">Bis(5'-nucleosyl)-tetraphosphatase PrpE [asymmetrical]</fullName>
        <ecNumber evidence="1">3.6.1.17</ecNumber>
    </recommendedName>
    <alternativeName>
        <fullName evidence="1">Ap4A hydrolase</fullName>
    </alternativeName>
    <alternativeName>
        <fullName evidence="1">Diadenosine 5',5'''-P1,P4-tetraphosphate asymmetrical hydrolase</fullName>
        <shortName evidence="1">Diadenosine tetraphosphatase</shortName>
    </alternativeName>
</protein>
<keyword id="KW-0378">Hydrolase</keyword>
<keyword id="KW-0533">Nickel</keyword>
<sequence>MKYDIIGDIHGCFQEFQNLTEKLGYNWSSGLPVHPDQRKLAFVGDITDRGPHSLRMIEIVWELVIHKKEAYYAPGNHCNKLYRFFLGRNVTVAHGLETTVAEYEALPSHKQNIIKEKFITLYEQSPLYHILDEKRVIVCHAGIRQDYIGRRDKKVQTFVLYGDITGEKHADGSPVRRDWAQEYKGQAWIVYGHTPVAEPRFINQTVNIDTGAVFGGKLTGLRYPEMETISVPSSLPFVAEKFRPIS</sequence>
<dbReference type="EC" id="3.6.1.17" evidence="1"/>
<dbReference type="EMBL" id="CP001176">
    <property type="protein sequence ID" value="ACK63456.1"/>
    <property type="molecule type" value="Genomic_DNA"/>
</dbReference>
<dbReference type="RefSeq" id="WP_000872697.1">
    <property type="nucleotide sequence ID" value="NC_011725.1"/>
</dbReference>
<dbReference type="SMR" id="B7HGW3"/>
<dbReference type="KEGG" id="bcb:BCB4264_A1257"/>
<dbReference type="HOGENOM" id="CLU_023125_3_0_9"/>
<dbReference type="Proteomes" id="UP000007096">
    <property type="component" value="Chromosome"/>
</dbReference>
<dbReference type="GO" id="GO:0005737">
    <property type="term" value="C:cytoplasm"/>
    <property type="evidence" value="ECO:0007669"/>
    <property type="project" value="TreeGrafter"/>
</dbReference>
<dbReference type="GO" id="GO:0004081">
    <property type="term" value="F:bis(5'-nucleosyl)-tetraphosphatase (asymmetrical) activity"/>
    <property type="evidence" value="ECO:0007669"/>
    <property type="project" value="UniProtKB-UniRule"/>
</dbReference>
<dbReference type="GO" id="GO:0016151">
    <property type="term" value="F:nickel cation binding"/>
    <property type="evidence" value="ECO:0007669"/>
    <property type="project" value="UniProtKB-UniRule"/>
</dbReference>
<dbReference type="GO" id="GO:0016791">
    <property type="term" value="F:phosphatase activity"/>
    <property type="evidence" value="ECO:0007669"/>
    <property type="project" value="TreeGrafter"/>
</dbReference>
<dbReference type="CDD" id="cd07423">
    <property type="entry name" value="MPP_Prp_like"/>
    <property type="match status" value="1"/>
</dbReference>
<dbReference type="Gene3D" id="3.60.21.10">
    <property type="match status" value="1"/>
</dbReference>
<dbReference type="HAMAP" id="MF_01443">
    <property type="entry name" value="PrpE"/>
    <property type="match status" value="1"/>
</dbReference>
<dbReference type="InterPro" id="IPR050126">
    <property type="entry name" value="Ap4A_hydrolase"/>
</dbReference>
<dbReference type="InterPro" id="IPR023937">
    <property type="entry name" value="Bis(5'-nucleosyl)-tetraP_PrpE"/>
</dbReference>
<dbReference type="InterPro" id="IPR004843">
    <property type="entry name" value="Calcineurin-like_PHP_ApaH"/>
</dbReference>
<dbReference type="InterPro" id="IPR029052">
    <property type="entry name" value="Metallo-depent_PP-like"/>
</dbReference>
<dbReference type="InterPro" id="IPR041780">
    <property type="entry name" value="MPP_PrpE-like"/>
</dbReference>
<dbReference type="NCBIfam" id="NF010148">
    <property type="entry name" value="PRK13625.1"/>
    <property type="match status" value="1"/>
</dbReference>
<dbReference type="PANTHER" id="PTHR42850:SF7">
    <property type="entry name" value="BIS(5'-NUCLEOSYL)-TETRAPHOSPHATASE PRPE [ASYMMETRICAL]"/>
    <property type="match status" value="1"/>
</dbReference>
<dbReference type="PANTHER" id="PTHR42850">
    <property type="entry name" value="METALLOPHOSPHOESTERASE"/>
    <property type="match status" value="1"/>
</dbReference>
<dbReference type="Pfam" id="PF00149">
    <property type="entry name" value="Metallophos"/>
    <property type="match status" value="1"/>
</dbReference>
<dbReference type="SUPFAM" id="SSF56300">
    <property type="entry name" value="Metallo-dependent phosphatases"/>
    <property type="match status" value="1"/>
</dbReference>
<accession>B7HGW3</accession>
<name>PRPE_BACC4</name>
<proteinExistence type="inferred from homology"/>
<reference key="1">
    <citation type="submission" date="2008-10" db="EMBL/GenBank/DDBJ databases">
        <title>Genome sequence of Bacillus cereus B4264.</title>
        <authorList>
            <person name="Dodson R.J."/>
            <person name="Durkin A.S."/>
            <person name="Rosovitz M.J."/>
            <person name="Rasko D.A."/>
            <person name="Hoffmaster A."/>
            <person name="Ravel J."/>
            <person name="Sutton G."/>
        </authorList>
    </citation>
    <scope>NUCLEOTIDE SEQUENCE [LARGE SCALE GENOMIC DNA]</scope>
    <source>
        <strain>B4264</strain>
    </source>
</reference>
<organism>
    <name type="scientific">Bacillus cereus (strain B4264)</name>
    <dbReference type="NCBI Taxonomy" id="405532"/>
    <lineage>
        <taxon>Bacteria</taxon>
        <taxon>Bacillati</taxon>
        <taxon>Bacillota</taxon>
        <taxon>Bacilli</taxon>
        <taxon>Bacillales</taxon>
        <taxon>Bacillaceae</taxon>
        <taxon>Bacillus</taxon>
        <taxon>Bacillus cereus group</taxon>
    </lineage>
</organism>